<keyword id="KW-0687">Ribonucleoprotein</keyword>
<keyword id="KW-0689">Ribosomal protein</keyword>
<evidence type="ECO:0000305" key="1"/>
<organism>
    <name type="scientific">Pyrococcus horikoshii (strain ATCC 700860 / DSM 12428 / JCM 9974 / NBRC 100139 / OT-3)</name>
    <dbReference type="NCBI Taxonomy" id="70601"/>
    <lineage>
        <taxon>Archaea</taxon>
        <taxon>Methanobacteriati</taxon>
        <taxon>Methanobacteriota</taxon>
        <taxon>Thermococci</taxon>
        <taxon>Thermococcales</taxon>
        <taxon>Thermococcaceae</taxon>
        <taxon>Pyrococcus</taxon>
    </lineage>
</organism>
<proteinExistence type="inferred from homology"/>
<comment type="similarity">
    <text evidence="1">Belongs to the universal ribosomal protein uS2 family.</text>
</comment>
<comment type="sequence caution" evidence="1">
    <conflict type="erroneous initiation">
        <sequence resource="EMBL-CDS" id="BAA30741"/>
    </conflict>
</comment>
<reference key="1">
    <citation type="journal article" date="1998" name="DNA Res.">
        <title>Complete sequence and gene organization of the genome of a hyper-thermophilic archaebacterium, Pyrococcus horikoshii OT3.</title>
        <authorList>
            <person name="Kawarabayasi Y."/>
            <person name="Sawada M."/>
            <person name="Horikawa H."/>
            <person name="Haikawa Y."/>
            <person name="Hino Y."/>
            <person name="Yamamoto S."/>
            <person name="Sekine M."/>
            <person name="Baba S."/>
            <person name="Kosugi H."/>
            <person name="Hosoyama A."/>
            <person name="Nagai Y."/>
            <person name="Sakai M."/>
            <person name="Ogura K."/>
            <person name="Otsuka R."/>
            <person name="Nakazawa H."/>
            <person name="Takamiya M."/>
            <person name="Ohfuku Y."/>
            <person name="Funahashi T."/>
            <person name="Tanaka T."/>
            <person name="Kudoh Y."/>
            <person name="Yamazaki J."/>
            <person name="Kushida N."/>
            <person name="Oguchi A."/>
            <person name="Aoki K."/>
            <person name="Yoshizawa T."/>
            <person name="Nakamura Y."/>
            <person name="Robb F.T."/>
            <person name="Horikoshi K."/>
            <person name="Masuchi Y."/>
            <person name="Shizuya H."/>
            <person name="Kikuchi H."/>
        </authorList>
    </citation>
    <scope>NUCLEOTIDE SEQUENCE [LARGE SCALE GENOMIC DNA]</scope>
    <source>
        <strain>ATCC 700860 / DSM 12428 / JCM 9974 / NBRC 100139 / OT-3</strain>
    </source>
</reference>
<accession>O59295</accession>
<dbReference type="EMBL" id="BA000001">
    <property type="protein sequence ID" value="BAA30741.1"/>
    <property type="status" value="ALT_INIT"/>
    <property type="molecule type" value="Genomic_DNA"/>
</dbReference>
<dbReference type="PIR" id="E71042">
    <property type="entry name" value="E71042"/>
</dbReference>
<dbReference type="RefSeq" id="WP_048053445.1">
    <property type="nucleotide sequence ID" value="NC_000961.1"/>
</dbReference>
<dbReference type="SMR" id="O59295"/>
<dbReference type="STRING" id="70601.gene:9378619"/>
<dbReference type="EnsemblBacteria" id="BAA30741">
    <property type="protein sequence ID" value="BAA30741"/>
    <property type="gene ID" value="BAA30741"/>
</dbReference>
<dbReference type="GeneID" id="1442480"/>
<dbReference type="KEGG" id="pho:PH1629"/>
<dbReference type="eggNOG" id="arCOG04245">
    <property type="taxonomic scope" value="Archaea"/>
</dbReference>
<dbReference type="OrthoDB" id="371797at2157"/>
<dbReference type="Proteomes" id="UP000000752">
    <property type="component" value="Chromosome"/>
</dbReference>
<dbReference type="GO" id="GO:0015935">
    <property type="term" value="C:small ribosomal subunit"/>
    <property type="evidence" value="ECO:0007669"/>
    <property type="project" value="InterPro"/>
</dbReference>
<dbReference type="GO" id="GO:0003735">
    <property type="term" value="F:structural constituent of ribosome"/>
    <property type="evidence" value="ECO:0007669"/>
    <property type="project" value="InterPro"/>
</dbReference>
<dbReference type="GO" id="GO:0006412">
    <property type="term" value="P:translation"/>
    <property type="evidence" value="ECO:0007669"/>
    <property type="project" value="UniProtKB-UniRule"/>
</dbReference>
<dbReference type="CDD" id="cd01425">
    <property type="entry name" value="RPS2"/>
    <property type="match status" value="1"/>
</dbReference>
<dbReference type="FunFam" id="3.40.50.10490:FF:000030">
    <property type="entry name" value="30S ribosomal protein S2"/>
    <property type="match status" value="1"/>
</dbReference>
<dbReference type="Gene3D" id="3.40.50.10490">
    <property type="entry name" value="Glucose-6-phosphate isomerase like protein, domain 1"/>
    <property type="match status" value="1"/>
</dbReference>
<dbReference type="HAMAP" id="MF_00291_A">
    <property type="entry name" value="Ribosomal_uS2_A"/>
    <property type="match status" value="1"/>
</dbReference>
<dbReference type="InterPro" id="IPR001865">
    <property type="entry name" value="Ribosomal_uS2"/>
</dbReference>
<dbReference type="InterPro" id="IPR023454">
    <property type="entry name" value="Ribosomal_uS2_arc"/>
</dbReference>
<dbReference type="InterPro" id="IPR018130">
    <property type="entry name" value="Ribosomal_uS2_CS"/>
</dbReference>
<dbReference type="InterPro" id="IPR005707">
    <property type="entry name" value="Ribosomal_uS2_euk/arc"/>
</dbReference>
<dbReference type="InterPro" id="IPR023591">
    <property type="entry name" value="Ribosomal_uS2_flav_dom_sf"/>
</dbReference>
<dbReference type="NCBIfam" id="TIGR01012">
    <property type="entry name" value="uS2_euk_arch"/>
    <property type="match status" value="1"/>
</dbReference>
<dbReference type="PANTHER" id="PTHR11489">
    <property type="entry name" value="40S RIBOSOMAL PROTEIN SA"/>
    <property type="match status" value="1"/>
</dbReference>
<dbReference type="Pfam" id="PF00318">
    <property type="entry name" value="Ribosomal_S2"/>
    <property type="match status" value="2"/>
</dbReference>
<dbReference type="PRINTS" id="PR00395">
    <property type="entry name" value="RIBOSOMALS2"/>
</dbReference>
<dbReference type="SUPFAM" id="SSF52313">
    <property type="entry name" value="Ribosomal protein S2"/>
    <property type="match status" value="1"/>
</dbReference>
<dbReference type="PROSITE" id="PS00962">
    <property type="entry name" value="RIBOSOMAL_S2_1"/>
    <property type="match status" value="1"/>
</dbReference>
<dbReference type="PROSITE" id="PS00963">
    <property type="entry name" value="RIBOSOMAL_S2_2"/>
    <property type="match status" value="1"/>
</dbReference>
<protein>
    <recommendedName>
        <fullName evidence="1">Small ribosomal subunit protein uS2</fullName>
    </recommendedName>
    <alternativeName>
        <fullName>30S ribosomal protein S2</fullName>
    </alternativeName>
</protein>
<name>RS2_PYRHO</name>
<sequence length="202" mass="23022">MADEYLVPLDQYLAAGVHIGTQQKTKDMKKFIYRVRQDGLYVLDVRKTDERLKVAGKFLARFEPQSILAVSVRLYGQKPVKKFGEVTGARAIPGRFLPGTMTNPAVKNFFEPEVIIITDPRADHQAMKEAIEIGIPIVALVDTENLLSYVDLAIPTNNKGRKALALIYWILAREILYNRGEISSREEFKIPVEEFEMKIVRR</sequence>
<gene>
    <name type="primary">rps2</name>
    <name type="ordered locus">PH1629</name>
</gene>
<feature type="chain" id="PRO_0000134331" description="Small ribosomal subunit protein uS2">
    <location>
        <begin position="1"/>
        <end position="202"/>
    </location>
</feature>